<accession>Q0DIV0</accession>
<accession>B7EMT8</accession>
<accession>O22101</accession>
<accession>Q6L4M5</accession>
<organism>
    <name type="scientific">Oryza sativa subsp. japonica</name>
    <name type="common">Rice</name>
    <dbReference type="NCBI Taxonomy" id="39947"/>
    <lineage>
        <taxon>Eukaryota</taxon>
        <taxon>Viridiplantae</taxon>
        <taxon>Streptophyta</taxon>
        <taxon>Embryophyta</taxon>
        <taxon>Tracheophyta</taxon>
        <taxon>Spermatophyta</taxon>
        <taxon>Magnoliopsida</taxon>
        <taxon>Liliopsida</taxon>
        <taxon>Poales</taxon>
        <taxon>Poaceae</taxon>
        <taxon>BOP clade</taxon>
        <taxon>Oryzoideae</taxon>
        <taxon>Oryzeae</taxon>
        <taxon>Oryzinae</taxon>
        <taxon>Oryza</taxon>
        <taxon>Oryza sativa</taxon>
    </lineage>
</organism>
<feature type="transit peptide" description="Chloroplast" evidence="2">
    <location>
        <begin position="1"/>
        <end status="unknown"/>
    </location>
</feature>
<feature type="chain" id="PRO_0000008884" description="Ferrochelatase-2, chloroplastic">
    <location>
        <begin status="unknown"/>
        <end position="526"/>
    </location>
</feature>
<comment type="function">
    <text>Catalyzes the ferrous insertion into protoporphyrin IX.</text>
</comment>
<comment type="catalytic activity">
    <reaction>
        <text>heme b + 2 H(+) = protoporphyrin IX + Fe(2+)</text>
        <dbReference type="Rhea" id="RHEA:22584"/>
        <dbReference type="ChEBI" id="CHEBI:15378"/>
        <dbReference type="ChEBI" id="CHEBI:29033"/>
        <dbReference type="ChEBI" id="CHEBI:57306"/>
        <dbReference type="ChEBI" id="CHEBI:60344"/>
        <dbReference type="EC" id="4.98.1.1"/>
    </reaction>
</comment>
<comment type="pathway">
    <text>Porphyrin-containing compound metabolism; protoheme biosynthesis; protoheme from protoporphyrin-IX: step 1/1.</text>
</comment>
<comment type="subcellular location">
    <subcellularLocation>
        <location evidence="1">Plastid</location>
        <location evidence="1">Chloroplast</location>
    </subcellularLocation>
</comment>
<comment type="similarity">
    <text evidence="3">Belongs to the ferrochelatase family.</text>
</comment>
<dbReference type="EC" id="4.98.1.1"/>
<dbReference type="EMBL" id="AC134348">
    <property type="protein sequence ID" value="AAT38095.1"/>
    <property type="molecule type" value="Genomic_DNA"/>
</dbReference>
<dbReference type="EMBL" id="AC135929">
    <property type="protein sequence ID" value="AAV31391.1"/>
    <property type="molecule type" value="Genomic_DNA"/>
</dbReference>
<dbReference type="EMBL" id="AP008211">
    <property type="protein sequence ID" value="BAF17223.1"/>
    <property type="molecule type" value="Genomic_DNA"/>
</dbReference>
<dbReference type="EMBL" id="AP014961">
    <property type="status" value="NOT_ANNOTATED_CDS"/>
    <property type="molecule type" value="Genomic_DNA"/>
</dbReference>
<dbReference type="EMBL" id="AK073873">
    <property type="protein sequence ID" value="BAG93685.1"/>
    <property type="molecule type" value="mRNA"/>
</dbReference>
<dbReference type="RefSeq" id="XP_015640145.1">
    <property type="nucleotide sequence ID" value="XM_015784659.1"/>
</dbReference>
<dbReference type="SMR" id="Q0DIV0"/>
<dbReference type="FunCoup" id="Q0DIV0">
    <property type="interactions" value="2765"/>
</dbReference>
<dbReference type="STRING" id="39947.Q0DIV0"/>
<dbReference type="PaxDb" id="39947-Q0DIV0"/>
<dbReference type="KEGG" id="dosa:Os05g0361200"/>
<dbReference type="eggNOG" id="KOG1321">
    <property type="taxonomic scope" value="Eukaryota"/>
</dbReference>
<dbReference type="HOGENOM" id="CLU_018884_4_3_1"/>
<dbReference type="InParanoid" id="Q0DIV0"/>
<dbReference type="OrthoDB" id="1323at2759"/>
<dbReference type="BRENDA" id="4.99.1.1">
    <property type="organism ID" value="8948"/>
</dbReference>
<dbReference type="UniPathway" id="UPA00252">
    <property type="reaction ID" value="UER00325"/>
</dbReference>
<dbReference type="Proteomes" id="UP000000763">
    <property type="component" value="Chromosome 5"/>
</dbReference>
<dbReference type="Proteomes" id="UP000059680">
    <property type="component" value="Chromosome 5"/>
</dbReference>
<dbReference type="GO" id="GO:0009507">
    <property type="term" value="C:chloroplast"/>
    <property type="evidence" value="ECO:0007669"/>
    <property type="project" value="UniProtKB-SubCell"/>
</dbReference>
<dbReference type="GO" id="GO:0005739">
    <property type="term" value="C:mitochondrion"/>
    <property type="evidence" value="ECO:0000318"/>
    <property type="project" value="GO_Central"/>
</dbReference>
<dbReference type="GO" id="GO:0004325">
    <property type="term" value="F:ferrochelatase activity"/>
    <property type="evidence" value="ECO:0000318"/>
    <property type="project" value="GO_Central"/>
</dbReference>
<dbReference type="GO" id="GO:0006783">
    <property type="term" value="P:heme biosynthetic process"/>
    <property type="evidence" value="ECO:0000318"/>
    <property type="project" value="GO_Central"/>
</dbReference>
<dbReference type="CDD" id="cd00419">
    <property type="entry name" value="Ferrochelatase_C"/>
    <property type="match status" value="1"/>
</dbReference>
<dbReference type="CDD" id="cd03411">
    <property type="entry name" value="Ferrochelatase_N"/>
    <property type="match status" value="1"/>
</dbReference>
<dbReference type="FunFam" id="3.40.50.1400:FF:000006">
    <property type="entry name" value="Ferrochelatase"/>
    <property type="match status" value="1"/>
</dbReference>
<dbReference type="Gene3D" id="3.40.50.1400">
    <property type="match status" value="2"/>
</dbReference>
<dbReference type="Gene3D" id="1.10.3460.10">
    <property type="entry name" value="Chlorophyll a/b binding protein domain"/>
    <property type="match status" value="1"/>
</dbReference>
<dbReference type="HAMAP" id="MF_00323">
    <property type="entry name" value="Ferrochelatase"/>
    <property type="match status" value="1"/>
</dbReference>
<dbReference type="InterPro" id="IPR001015">
    <property type="entry name" value="Ferrochelatase"/>
</dbReference>
<dbReference type="InterPro" id="IPR019772">
    <property type="entry name" value="Ferrochelatase_AS"/>
</dbReference>
<dbReference type="InterPro" id="IPR033644">
    <property type="entry name" value="Ferrochelatase_C"/>
</dbReference>
<dbReference type="InterPro" id="IPR033659">
    <property type="entry name" value="Ferrochelatase_N"/>
</dbReference>
<dbReference type="NCBIfam" id="TIGR00109">
    <property type="entry name" value="hemH"/>
    <property type="match status" value="1"/>
</dbReference>
<dbReference type="PANTHER" id="PTHR11108">
    <property type="entry name" value="FERROCHELATASE"/>
    <property type="match status" value="1"/>
</dbReference>
<dbReference type="PANTHER" id="PTHR11108:SF9">
    <property type="entry name" value="FERROCHELATASE-2, CHLOROPLASTIC"/>
    <property type="match status" value="1"/>
</dbReference>
<dbReference type="Pfam" id="PF00762">
    <property type="entry name" value="Ferrochelatase"/>
    <property type="match status" value="1"/>
</dbReference>
<dbReference type="SUPFAM" id="SSF53800">
    <property type="entry name" value="Chelatase"/>
    <property type="match status" value="1"/>
</dbReference>
<dbReference type="SUPFAM" id="SSF103511">
    <property type="entry name" value="Chlorophyll a-b binding protein"/>
    <property type="match status" value="1"/>
</dbReference>
<dbReference type="PROSITE" id="PS00534">
    <property type="entry name" value="FERROCHELATASE"/>
    <property type="match status" value="1"/>
</dbReference>
<protein>
    <recommendedName>
        <fullName>Ferrochelatase-2, chloroplastic</fullName>
        <ecNumber>4.98.1.1</ecNumber>
    </recommendedName>
    <alternativeName>
        <fullName>Ferrochelatase II</fullName>
    </alternativeName>
    <alternativeName>
        <fullName>Heme synthase 2</fullName>
    </alternativeName>
    <alternativeName>
        <fullName>Protoheme ferro-lyase 2</fullName>
    </alternativeName>
</protein>
<name>HEMH2_ORYSJ</name>
<evidence type="ECO:0000250" key="1"/>
<evidence type="ECO:0000255" key="2"/>
<evidence type="ECO:0000305" key="3"/>
<keyword id="KW-0150">Chloroplast</keyword>
<keyword id="KW-0350">Heme biosynthesis</keyword>
<keyword id="KW-0408">Iron</keyword>
<keyword id="KW-0456">Lyase</keyword>
<keyword id="KW-0934">Plastid</keyword>
<keyword id="KW-0627">Porphyrin biosynthesis</keyword>
<keyword id="KW-1185">Reference proteome</keyword>
<keyword id="KW-0809">Transit peptide</keyword>
<proteinExistence type="evidence at transcript level"/>
<reference key="1">
    <citation type="journal article" date="2005" name="Mol. Genet. Genomics">
        <title>A fine physical map of the rice chromosome 5.</title>
        <authorList>
            <person name="Cheng C.-H."/>
            <person name="Chung M.C."/>
            <person name="Liu S.-M."/>
            <person name="Chen S.-K."/>
            <person name="Kao F.Y."/>
            <person name="Lin S.-J."/>
            <person name="Hsiao S.-H."/>
            <person name="Tseng I.C."/>
            <person name="Hsing Y.-I.C."/>
            <person name="Wu H.-P."/>
            <person name="Chen C.-S."/>
            <person name="Shaw J.-F."/>
            <person name="Wu J."/>
            <person name="Matsumoto T."/>
            <person name="Sasaki T."/>
            <person name="Chen H.-C."/>
            <person name="Chow T.-Y."/>
        </authorList>
    </citation>
    <scope>NUCLEOTIDE SEQUENCE [LARGE SCALE GENOMIC DNA]</scope>
    <source>
        <strain>cv. Nipponbare</strain>
    </source>
</reference>
<reference key="2">
    <citation type="journal article" date="2005" name="Nature">
        <title>The map-based sequence of the rice genome.</title>
        <authorList>
            <consortium name="International rice genome sequencing project (IRGSP)"/>
        </authorList>
    </citation>
    <scope>NUCLEOTIDE SEQUENCE [LARGE SCALE GENOMIC DNA]</scope>
    <source>
        <strain>cv. Nipponbare</strain>
    </source>
</reference>
<reference key="3">
    <citation type="journal article" date="2008" name="Nucleic Acids Res.">
        <title>The rice annotation project database (RAP-DB): 2008 update.</title>
        <authorList>
            <consortium name="The rice annotation project (RAP)"/>
        </authorList>
    </citation>
    <scope>GENOME REANNOTATION</scope>
    <source>
        <strain>cv. Nipponbare</strain>
    </source>
</reference>
<reference key="4">
    <citation type="journal article" date="2013" name="Rice">
        <title>Improvement of the Oryza sativa Nipponbare reference genome using next generation sequence and optical map data.</title>
        <authorList>
            <person name="Kawahara Y."/>
            <person name="de la Bastide M."/>
            <person name="Hamilton J.P."/>
            <person name="Kanamori H."/>
            <person name="McCombie W.R."/>
            <person name="Ouyang S."/>
            <person name="Schwartz D.C."/>
            <person name="Tanaka T."/>
            <person name="Wu J."/>
            <person name="Zhou S."/>
            <person name="Childs K.L."/>
            <person name="Davidson R.M."/>
            <person name="Lin H."/>
            <person name="Quesada-Ocampo L."/>
            <person name="Vaillancourt B."/>
            <person name="Sakai H."/>
            <person name="Lee S.S."/>
            <person name="Kim J."/>
            <person name="Numa H."/>
            <person name="Itoh T."/>
            <person name="Buell C.R."/>
            <person name="Matsumoto T."/>
        </authorList>
    </citation>
    <scope>GENOME REANNOTATION</scope>
    <source>
        <strain>cv. Nipponbare</strain>
    </source>
</reference>
<reference key="5">
    <citation type="journal article" date="2003" name="Science">
        <title>Collection, mapping, and annotation of over 28,000 cDNA clones from japonica rice.</title>
        <authorList>
            <consortium name="The rice full-length cDNA consortium"/>
        </authorList>
    </citation>
    <scope>NUCLEOTIDE SEQUENCE [LARGE SCALE MRNA]</scope>
    <source>
        <strain>cv. Nipponbare</strain>
    </source>
</reference>
<gene>
    <name type="ordered locus">Os05g0361200</name>
    <name type="ordered locus">LOC_Os05g29760</name>
    <name type="ORF">P0530H10.9</name>
    <name type="ORF">P0692D12.2</name>
</gene>
<sequence>MWSSSQASTRGVIEVGRVEAGPSHFPKRPAPRNSSRVNLSRTYAIKSCSVSSRTGLCLGQCYHKKSSACKCKLGWSSQPLSSLRHHLRVHSSASEAVLTSQSDFTKLLVGNEKIGVLLLNLGGPETLDDVQPFLFNLFADPDIIRLPRLFRFLQKPLAQFISVVRAPKSKEGYASIGGGSPLRQITDAQAEALRKALCDKDIPAKVYVGMRYWHPFTEEAIEQIKRDGITKLVVLPLYPQFSISTSGSSLRLLEGIFREDEYLVNMQHTVIPSWYQREGYIKAMATLIEKELRTFSEPQKVMIFFSAHGVPLAYVEEAGDPYKAEMEECVDLIMEELEKRGITNSCTLAYQSRVGPVEWLRPYTDETIIELGQKGVKSLLAVPISFVSEHIETLEEIDVEYKELALESGIKHWGRVPALGCEPTFITDLADAVIESLPYVGAMAVSNLEARQPLVPLGSVEELLAAYDSKRDELPPPVTVWEWGWTKSAETWNGRAAMLAVLALLVLEVTTGEGFLHQWGILPLFH</sequence>